<evidence type="ECO:0000255" key="1">
    <source>
        <dbReference type="HAMAP-Rule" id="MF_01841"/>
    </source>
</evidence>
<gene>
    <name evidence="1" type="primary">aguA</name>
    <name type="ordered locus">Sbal223_1234</name>
</gene>
<feature type="chain" id="PRO_1000188415" description="Putative agmatine deiminase">
    <location>
        <begin position="1"/>
        <end position="370"/>
    </location>
</feature>
<feature type="active site" description="Amidino-cysteine intermediate" evidence="1">
    <location>
        <position position="361"/>
    </location>
</feature>
<keyword id="KW-0378">Hydrolase</keyword>
<accession>B8E8S8</accession>
<reference key="1">
    <citation type="submission" date="2008-12" db="EMBL/GenBank/DDBJ databases">
        <title>Complete sequence of chromosome of Shewanella baltica OS223.</title>
        <authorList>
            <consortium name="US DOE Joint Genome Institute"/>
            <person name="Lucas S."/>
            <person name="Copeland A."/>
            <person name="Lapidus A."/>
            <person name="Glavina del Rio T."/>
            <person name="Dalin E."/>
            <person name="Tice H."/>
            <person name="Bruce D."/>
            <person name="Goodwin L."/>
            <person name="Pitluck S."/>
            <person name="Chertkov O."/>
            <person name="Meincke L."/>
            <person name="Brettin T."/>
            <person name="Detter J.C."/>
            <person name="Han C."/>
            <person name="Kuske C.R."/>
            <person name="Larimer F."/>
            <person name="Land M."/>
            <person name="Hauser L."/>
            <person name="Kyrpides N."/>
            <person name="Ovchinnikova G."/>
            <person name="Brettar I."/>
            <person name="Rodrigues J."/>
            <person name="Konstantinidis K."/>
            <person name="Tiedje J."/>
        </authorList>
    </citation>
    <scope>NUCLEOTIDE SEQUENCE [LARGE SCALE GENOMIC DNA]</scope>
    <source>
        <strain>OS223</strain>
    </source>
</reference>
<organism>
    <name type="scientific">Shewanella baltica (strain OS223)</name>
    <dbReference type="NCBI Taxonomy" id="407976"/>
    <lineage>
        <taxon>Bacteria</taxon>
        <taxon>Pseudomonadati</taxon>
        <taxon>Pseudomonadota</taxon>
        <taxon>Gammaproteobacteria</taxon>
        <taxon>Alteromonadales</taxon>
        <taxon>Shewanellaceae</taxon>
        <taxon>Shewanella</taxon>
    </lineage>
</organism>
<protein>
    <recommendedName>
        <fullName evidence="1">Putative agmatine deiminase</fullName>
        <ecNumber evidence="1">3.5.3.12</ecNumber>
    </recommendedName>
    <alternativeName>
        <fullName evidence="1">Agmatine iminohydrolase</fullName>
    </alternativeName>
</protein>
<proteinExistence type="inferred from homology"/>
<sequence length="370" mass="40845">MTNANVDATPLTTKPSQDGFYMPAEWAAQQAVWMIWPYRPDNWRSAGAYAQATFAKVADAIGAATPVYMGVPKAFLAEAKTVMPSHVTLVEMDSNDCWARDTGPTVVVNDNGECRGVDWGFNAWGGHNGGLYFPWDKDEQVAQQMLKQHGFARYSAPLILEGGSIHVDGEGTCMTSAECLLNANRNPDLTKEQIEDLLRDYLNVKQFIWLQDGVYMDETDGHIDNMCCFARPGEVILHWTDDETDPQYSRSKAAFDVLQNTVDAQGRKLKIHLLPQPGPLYCTEEESKGVTEGTGVPRTAGERLAGSYVNFLITNNRIVFPLLDPATDDIAAQKLQEIFPEYEIVGVPAREILLGGGNIHCITQQIPSGK</sequence>
<comment type="catalytic activity">
    <reaction evidence="1">
        <text>agmatine + H2O = N-carbamoylputrescine + NH4(+)</text>
        <dbReference type="Rhea" id="RHEA:18037"/>
        <dbReference type="ChEBI" id="CHEBI:15377"/>
        <dbReference type="ChEBI" id="CHEBI:28938"/>
        <dbReference type="ChEBI" id="CHEBI:58145"/>
        <dbReference type="ChEBI" id="CHEBI:58318"/>
        <dbReference type="EC" id="3.5.3.12"/>
    </reaction>
</comment>
<comment type="similarity">
    <text evidence="1">Belongs to the agmatine deiminase family.</text>
</comment>
<dbReference type="EC" id="3.5.3.12" evidence="1"/>
<dbReference type="EMBL" id="CP001252">
    <property type="protein sequence ID" value="ACK45744.1"/>
    <property type="molecule type" value="Genomic_DNA"/>
</dbReference>
<dbReference type="RefSeq" id="WP_012587100.1">
    <property type="nucleotide sequence ID" value="NC_011663.1"/>
</dbReference>
<dbReference type="SMR" id="B8E8S8"/>
<dbReference type="KEGG" id="sbp:Sbal223_1234"/>
<dbReference type="HOGENOM" id="CLU_037682_1_0_6"/>
<dbReference type="Proteomes" id="UP000002507">
    <property type="component" value="Chromosome"/>
</dbReference>
<dbReference type="GO" id="GO:0047632">
    <property type="term" value="F:agmatine deiminase activity"/>
    <property type="evidence" value="ECO:0007669"/>
    <property type="project" value="UniProtKB-UniRule"/>
</dbReference>
<dbReference type="GO" id="GO:0004668">
    <property type="term" value="F:protein-arginine deiminase activity"/>
    <property type="evidence" value="ECO:0007669"/>
    <property type="project" value="InterPro"/>
</dbReference>
<dbReference type="GO" id="GO:0009446">
    <property type="term" value="P:putrescine biosynthetic process"/>
    <property type="evidence" value="ECO:0007669"/>
    <property type="project" value="InterPro"/>
</dbReference>
<dbReference type="Gene3D" id="3.75.10.10">
    <property type="entry name" value="L-arginine/glycine Amidinotransferase, Chain A"/>
    <property type="match status" value="1"/>
</dbReference>
<dbReference type="HAMAP" id="MF_01841">
    <property type="entry name" value="Agmatine_deimin"/>
    <property type="match status" value="1"/>
</dbReference>
<dbReference type="InterPro" id="IPR017754">
    <property type="entry name" value="Agmatine_deiminase"/>
</dbReference>
<dbReference type="InterPro" id="IPR007466">
    <property type="entry name" value="Peptidyl-Arg-deiminase_porph"/>
</dbReference>
<dbReference type="NCBIfam" id="TIGR03380">
    <property type="entry name" value="agmatine_aguA"/>
    <property type="match status" value="1"/>
</dbReference>
<dbReference type="NCBIfam" id="NF010070">
    <property type="entry name" value="PRK13551.1"/>
    <property type="match status" value="1"/>
</dbReference>
<dbReference type="PANTHER" id="PTHR31377">
    <property type="entry name" value="AGMATINE DEIMINASE-RELATED"/>
    <property type="match status" value="1"/>
</dbReference>
<dbReference type="PANTHER" id="PTHR31377:SF0">
    <property type="entry name" value="AGMATINE DEIMINASE-RELATED"/>
    <property type="match status" value="1"/>
</dbReference>
<dbReference type="Pfam" id="PF04371">
    <property type="entry name" value="PAD_porph"/>
    <property type="match status" value="1"/>
</dbReference>
<dbReference type="SUPFAM" id="SSF55909">
    <property type="entry name" value="Pentein"/>
    <property type="match status" value="1"/>
</dbReference>
<name>AGUA_SHEB2</name>